<gene>
    <name evidence="10 12" type="primary">PCNA</name>
    <name evidence="12" type="synonym">mus209</name>
    <name evidence="9" type="synonym">PCNA1</name>
    <name evidence="12" type="ORF">CG9193</name>
</gene>
<proteinExistence type="evidence at protein level"/>
<organism>
    <name type="scientific">Drosophila melanogaster</name>
    <name type="common">Fruit fly</name>
    <dbReference type="NCBI Taxonomy" id="7227"/>
    <lineage>
        <taxon>Eukaryota</taxon>
        <taxon>Metazoa</taxon>
        <taxon>Ecdysozoa</taxon>
        <taxon>Arthropoda</taxon>
        <taxon>Hexapoda</taxon>
        <taxon>Insecta</taxon>
        <taxon>Pterygota</taxon>
        <taxon>Neoptera</taxon>
        <taxon>Endopterygota</taxon>
        <taxon>Diptera</taxon>
        <taxon>Brachycera</taxon>
        <taxon>Muscomorpha</taxon>
        <taxon>Ephydroidea</taxon>
        <taxon>Drosophilidae</taxon>
        <taxon>Drosophila</taxon>
        <taxon>Sophophora</taxon>
    </lineage>
</organism>
<name>PCNA_DROME</name>
<evidence type="ECO:0000250" key="1">
    <source>
        <dbReference type="UniProtKB" id="P12004"/>
    </source>
</evidence>
<evidence type="ECO:0000255" key="2"/>
<evidence type="ECO:0000269" key="3">
    <source>
    </source>
</evidence>
<evidence type="ECO:0000269" key="4">
    <source>
    </source>
</evidence>
<evidence type="ECO:0000269" key="5">
    <source>
    </source>
</evidence>
<evidence type="ECO:0000269" key="6">
    <source>
    </source>
</evidence>
<evidence type="ECO:0000269" key="7">
    <source>
    </source>
</evidence>
<evidence type="ECO:0000269" key="8">
    <source>
    </source>
</evidence>
<evidence type="ECO:0000303" key="9">
    <source>
    </source>
</evidence>
<evidence type="ECO:0000303" key="10">
    <source>
    </source>
</evidence>
<evidence type="ECO:0000305" key="11"/>
<evidence type="ECO:0000312" key="12">
    <source>
        <dbReference type="FlyBase" id="FBgn0005655"/>
    </source>
</evidence>
<evidence type="ECO:0007829" key="13">
    <source>
        <dbReference type="PDB" id="4HK1"/>
    </source>
</evidence>
<reference key="1">
    <citation type="journal article" date="1990" name="Mol. Cell. Biol.">
        <title>Drosophila proliferating cell nuclear antigen (cyclin) gene: structure, expression during development, and specific binding of homeodomain proteins to its 5'-flanking region.</title>
        <authorList>
            <person name="Yamaguchi M."/>
            <person name="Nishida Y."/>
            <person name="Moriuchi T."/>
            <person name="Hirose F."/>
            <person name="Hui C.C."/>
            <person name="Suzuki Y."/>
            <person name="Matsukage A."/>
        </authorList>
    </citation>
    <scope>NUCLEOTIDE SEQUENCE [GENOMIC DNA]</scope>
    <scope>TISSUE SPECIFICITY</scope>
    <scope>DEVELOPMENTAL STAGE</scope>
</reference>
<reference key="2">
    <citation type="journal article" date="2000" name="Science">
        <title>The genome sequence of Drosophila melanogaster.</title>
        <authorList>
            <person name="Adams M.D."/>
            <person name="Celniker S.E."/>
            <person name="Holt R.A."/>
            <person name="Evans C.A."/>
            <person name="Gocayne J.D."/>
            <person name="Amanatides P.G."/>
            <person name="Scherer S.E."/>
            <person name="Li P.W."/>
            <person name="Hoskins R.A."/>
            <person name="Galle R.F."/>
            <person name="George R.A."/>
            <person name="Lewis S.E."/>
            <person name="Richards S."/>
            <person name="Ashburner M."/>
            <person name="Henderson S.N."/>
            <person name="Sutton G.G."/>
            <person name="Wortman J.R."/>
            <person name="Yandell M.D."/>
            <person name="Zhang Q."/>
            <person name="Chen L.X."/>
            <person name="Brandon R.C."/>
            <person name="Rogers Y.-H.C."/>
            <person name="Blazej R.G."/>
            <person name="Champe M."/>
            <person name="Pfeiffer B.D."/>
            <person name="Wan K.H."/>
            <person name="Doyle C."/>
            <person name="Baxter E.G."/>
            <person name="Helt G."/>
            <person name="Nelson C.R."/>
            <person name="Miklos G.L.G."/>
            <person name="Abril J.F."/>
            <person name="Agbayani A."/>
            <person name="An H.-J."/>
            <person name="Andrews-Pfannkoch C."/>
            <person name="Baldwin D."/>
            <person name="Ballew R.M."/>
            <person name="Basu A."/>
            <person name="Baxendale J."/>
            <person name="Bayraktaroglu L."/>
            <person name="Beasley E.M."/>
            <person name="Beeson K.Y."/>
            <person name="Benos P.V."/>
            <person name="Berman B.P."/>
            <person name="Bhandari D."/>
            <person name="Bolshakov S."/>
            <person name="Borkova D."/>
            <person name="Botchan M.R."/>
            <person name="Bouck J."/>
            <person name="Brokstein P."/>
            <person name="Brottier P."/>
            <person name="Burtis K.C."/>
            <person name="Busam D.A."/>
            <person name="Butler H."/>
            <person name="Cadieu E."/>
            <person name="Center A."/>
            <person name="Chandra I."/>
            <person name="Cherry J.M."/>
            <person name="Cawley S."/>
            <person name="Dahlke C."/>
            <person name="Davenport L.B."/>
            <person name="Davies P."/>
            <person name="de Pablos B."/>
            <person name="Delcher A."/>
            <person name="Deng Z."/>
            <person name="Mays A.D."/>
            <person name="Dew I."/>
            <person name="Dietz S.M."/>
            <person name="Dodson K."/>
            <person name="Doup L.E."/>
            <person name="Downes M."/>
            <person name="Dugan-Rocha S."/>
            <person name="Dunkov B.C."/>
            <person name="Dunn P."/>
            <person name="Durbin K.J."/>
            <person name="Evangelista C.C."/>
            <person name="Ferraz C."/>
            <person name="Ferriera S."/>
            <person name="Fleischmann W."/>
            <person name="Fosler C."/>
            <person name="Gabrielian A.E."/>
            <person name="Garg N.S."/>
            <person name="Gelbart W.M."/>
            <person name="Glasser K."/>
            <person name="Glodek A."/>
            <person name="Gong F."/>
            <person name="Gorrell J.H."/>
            <person name="Gu Z."/>
            <person name="Guan P."/>
            <person name="Harris M."/>
            <person name="Harris N.L."/>
            <person name="Harvey D.A."/>
            <person name="Heiman T.J."/>
            <person name="Hernandez J.R."/>
            <person name="Houck J."/>
            <person name="Hostin D."/>
            <person name="Houston K.A."/>
            <person name="Howland T.J."/>
            <person name="Wei M.-H."/>
            <person name="Ibegwam C."/>
            <person name="Jalali M."/>
            <person name="Kalush F."/>
            <person name="Karpen G.H."/>
            <person name="Ke Z."/>
            <person name="Kennison J.A."/>
            <person name="Ketchum K.A."/>
            <person name="Kimmel B.E."/>
            <person name="Kodira C.D."/>
            <person name="Kraft C.L."/>
            <person name="Kravitz S."/>
            <person name="Kulp D."/>
            <person name="Lai Z."/>
            <person name="Lasko P."/>
            <person name="Lei Y."/>
            <person name="Levitsky A.A."/>
            <person name="Li J.H."/>
            <person name="Li Z."/>
            <person name="Liang Y."/>
            <person name="Lin X."/>
            <person name="Liu X."/>
            <person name="Mattei B."/>
            <person name="McIntosh T.C."/>
            <person name="McLeod M.P."/>
            <person name="McPherson D."/>
            <person name="Merkulov G."/>
            <person name="Milshina N.V."/>
            <person name="Mobarry C."/>
            <person name="Morris J."/>
            <person name="Moshrefi A."/>
            <person name="Mount S.M."/>
            <person name="Moy M."/>
            <person name="Murphy B."/>
            <person name="Murphy L."/>
            <person name="Muzny D.M."/>
            <person name="Nelson D.L."/>
            <person name="Nelson D.R."/>
            <person name="Nelson K.A."/>
            <person name="Nixon K."/>
            <person name="Nusskern D.R."/>
            <person name="Pacleb J.M."/>
            <person name="Palazzolo M."/>
            <person name="Pittman G.S."/>
            <person name="Pan S."/>
            <person name="Pollard J."/>
            <person name="Puri V."/>
            <person name="Reese M.G."/>
            <person name="Reinert K."/>
            <person name="Remington K."/>
            <person name="Saunders R.D.C."/>
            <person name="Scheeler F."/>
            <person name="Shen H."/>
            <person name="Shue B.C."/>
            <person name="Siden-Kiamos I."/>
            <person name="Simpson M."/>
            <person name="Skupski M.P."/>
            <person name="Smith T.J."/>
            <person name="Spier E."/>
            <person name="Spradling A.C."/>
            <person name="Stapleton M."/>
            <person name="Strong R."/>
            <person name="Sun E."/>
            <person name="Svirskas R."/>
            <person name="Tector C."/>
            <person name="Turner R."/>
            <person name="Venter E."/>
            <person name="Wang A.H."/>
            <person name="Wang X."/>
            <person name="Wang Z.-Y."/>
            <person name="Wassarman D.A."/>
            <person name="Weinstock G.M."/>
            <person name="Weissenbach J."/>
            <person name="Williams S.M."/>
            <person name="Woodage T."/>
            <person name="Worley K.C."/>
            <person name="Wu D."/>
            <person name="Yang S."/>
            <person name="Yao Q.A."/>
            <person name="Ye J."/>
            <person name="Yeh R.-F."/>
            <person name="Zaveri J.S."/>
            <person name="Zhan M."/>
            <person name="Zhang G."/>
            <person name="Zhao Q."/>
            <person name="Zheng L."/>
            <person name="Zheng X.H."/>
            <person name="Zhong F.N."/>
            <person name="Zhong W."/>
            <person name="Zhou X."/>
            <person name="Zhu S.C."/>
            <person name="Zhu X."/>
            <person name="Smith H.O."/>
            <person name="Gibbs R.A."/>
            <person name="Myers E.W."/>
            <person name="Rubin G.M."/>
            <person name="Venter J.C."/>
        </authorList>
    </citation>
    <scope>NUCLEOTIDE SEQUENCE [LARGE SCALE GENOMIC DNA]</scope>
    <source>
        <strain>Berkeley</strain>
    </source>
</reference>
<reference key="3">
    <citation type="journal article" date="2002" name="Genome Biol.">
        <title>Annotation of the Drosophila melanogaster euchromatic genome: a systematic review.</title>
        <authorList>
            <person name="Misra S."/>
            <person name="Crosby M.A."/>
            <person name="Mungall C.J."/>
            <person name="Matthews B.B."/>
            <person name="Campbell K.S."/>
            <person name="Hradecky P."/>
            <person name="Huang Y."/>
            <person name="Kaminker J.S."/>
            <person name="Millburn G.H."/>
            <person name="Prochnik S.E."/>
            <person name="Smith C.D."/>
            <person name="Tupy J.L."/>
            <person name="Whitfield E.J."/>
            <person name="Bayraktaroglu L."/>
            <person name="Berman B.P."/>
            <person name="Bettencourt B.R."/>
            <person name="Celniker S.E."/>
            <person name="de Grey A.D.N.J."/>
            <person name="Drysdale R.A."/>
            <person name="Harris N.L."/>
            <person name="Richter J."/>
            <person name="Russo S."/>
            <person name="Schroeder A.J."/>
            <person name="Shu S.Q."/>
            <person name="Stapleton M."/>
            <person name="Yamada C."/>
            <person name="Ashburner M."/>
            <person name="Gelbart W.M."/>
            <person name="Rubin G.M."/>
            <person name="Lewis S.E."/>
        </authorList>
    </citation>
    <scope>GENOME REANNOTATION</scope>
    <source>
        <strain>Berkeley</strain>
    </source>
</reference>
<reference key="4">
    <citation type="journal article" date="2002" name="Genome Biol.">
        <title>A Drosophila full-length cDNA resource.</title>
        <authorList>
            <person name="Stapleton M."/>
            <person name="Carlson J.W."/>
            <person name="Brokstein P."/>
            <person name="Yu C."/>
            <person name="Champe M."/>
            <person name="George R.A."/>
            <person name="Guarin H."/>
            <person name="Kronmiller B."/>
            <person name="Pacleb J.M."/>
            <person name="Park S."/>
            <person name="Wan K.H."/>
            <person name="Rubin G.M."/>
            <person name="Celniker S.E."/>
        </authorList>
    </citation>
    <scope>NUCLEOTIDE SEQUENCE [LARGE SCALE MRNA]</scope>
    <source>
        <strain>Berkeley</strain>
        <tissue>Embryo</tissue>
    </source>
</reference>
<reference key="5">
    <citation type="journal article" date="1990" name="J. Biol. Chem.">
        <title>Drosophila proliferating cell nuclear antigen. Structural and functional homology with its mammalian counterpart.</title>
        <authorList>
            <person name="Ng L."/>
            <person name="Prelich G."/>
            <person name="Anderson C.W."/>
            <person name="Stillman B."/>
            <person name="Fisher P.A."/>
        </authorList>
    </citation>
    <scope>PROTEIN SEQUENCE OF 1-22</scope>
    <source>
        <strain>Oregon-R</strain>
    </source>
</reference>
<reference key="6">
    <citation type="journal article" date="1992" name="Nucleic Acids Res.">
        <title>Delta-type DNA polymerase characterized from Drosophila melanogaster embryos.</title>
        <authorList>
            <person name="Peck V.M."/>
            <person name="Gerner E.W."/>
            <person name="Cress A.E."/>
        </authorList>
    </citation>
    <scope>FUNCTION</scope>
</reference>
<reference key="7">
    <citation type="journal article" date="1994" name="EMBO J.">
        <title>Mutagen sensitivity and suppression of position-effect variegation result from mutations in mus209, the Drosophila gene encoding PCNA.</title>
        <authorList>
            <person name="Henderson D.S."/>
            <person name="Banga S.S."/>
            <person name="Grigliatto T.A."/>
            <person name="Boyd J.B."/>
        </authorList>
    </citation>
    <scope>DISRUPTION PHENOTYPE</scope>
</reference>
<reference key="8">
    <citation type="journal article" date="1997" name="Development">
        <title>The cramped gene of Drosophila is a member of the polycomb-group, and interacts with mus209, the gene encoding proliferating cell nuclear antigen.</title>
        <authorList>
            <person name="Yamamoto Y."/>
            <person name="Girard F."/>
            <person name="Bello B."/>
            <person name="Affolter M."/>
            <person name="Gehring W.J."/>
        </authorList>
    </citation>
    <scope>SUBCELLULAR LOCATION</scope>
    <source>
        <strain>Oregon-R</strain>
        <tissue>Embryo</tissue>
    </source>
</reference>
<reference key="9">
    <citation type="journal article" date="2006" name="FEBS J.">
        <title>Characterization of a second proliferating cell nuclear antigen (PCNA2) from Drosophila melanogaster.</title>
        <authorList>
            <person name="Ruike T."/>
            <person name="Takeuchi R."/>
            <person name="Takata K."/>
            <person name="Oshige M."/>
            <person name="Kasai N."/>
            <person name="Shimanouchi K."/>
            <person name="Kanai Y."/>
            <person name="Nakamura R."/>
            <person name="Sugawara F."/>
            <person name="Sakaguchi K."/>
        </authorList>
    </citation>
    <scope>FUNCTION</scope>
    <scope>SUBUNIT</scope>
    <scope>INTERACTION WITH POLD1 AND POLE1</scope>
    <scope>SUBCELLULAR LOCATION</scope>
    <scope>DEVELOPMENTAL STAGE</scope>
</reference>
<reference key="10">
    <citation type="journal article" date="2008" name="Dev. Cell">
        <title>Intrinsic negative cell cycle regulation provided by PIP box- and Cul4Cdt2-mediated destruction of E2f1 during S phase.</title>
        <authorList>
            <person name="Shibutani S.T."/>
            <person name="de la Cruz A.F."/>
            <person name="Tran V."/>
            <person name="Turbyfill W.J. III"/>
            <person name="Reis T."/>
            <person name="Edgar B.A."/>
            <person name="Duronio R.J."/>
        </authorList>
    </citation>
    <scope>INTERACTION WITH E2F</scope>
</reference>
<protein>
    <recommendedName>
        <fullName evidence="10">Proliferating cell nuclear antigen</fullName>
        <shortName evidence="10">PCNA</shortName>
    </recommendedName>
    <alternativeName>
        <fullName evidence="10">Cyclin</fullName>
    </alternativeName>
    <alternativeName>
        <fullName evidence="12">Mutagen-sensitive 209 protein</fullName>
    </alternativeName>
</protein>
<comment type="function">
    <text evidence="3">Likely to be an auxiliary protein of DNA polymerase delta complex and is probably involved in the control of DNA replication and repair by increasing the polymerase's processibility.</text>
</comment>
<comment type="subunit">
    <text evidence="1 4 5">Homotrimer (PubMed:17087725). Forms a complex with activator 1 heteropentamer in the presence of ATP (By similarity). Interacts with E2f (PubMed:19081076). Interacts with the catalytic subunits of two DNA polymerase complexes: PolD1 from the delta complex and PolE1/DNApol-epsilon255 from the epsilon complex (PubMed:17087725).</text>
</comment>
<comment type="subcellular location">
    <subcellularLocation>
        <location evidence="4 8">Nucleus</location>
    </subcellularLocation>
    <subcellularLocation>
        <location evidence="4">Chromosome</location>
    </subcellularLocation>
    <subcellularLocation>
        <location evidence="4">Cytoplasm</location>
    </subcellularLocation>
    <text evidence="4 8">Colocalizes with crm in polytene nuclei during embryogenesis (PubMed:9310333). Increased association with chromatin in response to DNA damage caused by methyl methanesulfonate (MMS), hydrogen peroxide (H2O2) and UV (PubMed:17087725).</text>
</comment>
<comment type="tissue specificity">
    <text evidence="6">Expressed at high levels in adult ovary.</text>
</comment>
<comment type="developmental stage">
    <text evidence="4 6">Expressed maternally and zygotically (PubMed:1968224). Expressed at high levels in embryos at 0-2 and 8-12 h of development (PubMed:17087725, PubMed:1968224). Moderate levels detected at later stages of embryogenesis, in unfertilized eggs and adult females, and relatively low levels of expression were detected in larvae and adult males (PubMed:17087725).</text>
</comment>
<comment type="disruption phenotype">
    <text evidence="7">Mutant flies show temperature-sensitive lethality, hypersensitivity to DNA-damaging agents such as ionizing radiation and methyl methanesulfonate, suppression of position-effect variegation and female sterility.</text>
</comment>
<comment type="similarity">
    <text evidence="11">Belongs to the PCNA family.</text>
</comment>
<feature type="chain" id="PRO_0000149170" description="Proliferating cell nuclear antigen">
    <location>
        <begin position="1"/>
        <end position="260"/>
    </location>
</feature>
<feature type="DNA-binding region" evidence="2">
    <location>
        <begin position="61"/>
        <end position="80"/>
    </location>
</feature>
<feature type="strand" evidence="13">
    <location>
        <begin position="2"/>
        <end position="7"/>
    </location>
</feature>
<feature type="helix" evidence="13">
    <location>
        <begin position="9"/>
        <end position="19"/>
    </location>
</feature>
<feature type="turn" evidence="13">
    <location>
        <begin position="20"/>
        <end position="22"/>
    </location>
</feature>
<feature type="strand" evidence="13">
    <location>
        <begin position="24"/>
        <end position="31"/>
    </location>
</feature>
<feature type="strand" evidence="13">
    <location>
        <begin position="34"/>
        <end position="40"/>
    </location>
</feature>
<feature type="strand" evidence="13">
    <location>
        <begin position="44"/>
        <end position="53"/>
    </location>
</feature>
<feature type="helix" evidence="13">
    <location>
        <begin position="54"/>
        <end position="56"/>
    </location>
</feature>
<feature type="strand" evidence="13">
    <location>
        <begin position="57"/>
        <end position="64"/>
    </location>
</feature>
<feature type="strand" evidence="13">
    <location>
        <begin position="66"/>
        <end position="71"/>
    </location>
</feature>
<feature type="helix" evidence="13">
    <location>
        <begin position="72"/>
        <end position="79"/>
    </location>
</feature>
<feature type="strand" evidence="13">
    <location>
        <begin position="87"/>
        <end position="92"/>
    </location>
</feature>
<feature type="strand" evidence="13">
    <location>
        <begin position="98"/>
        <end position="104"/>
    </location>
</feature>
<feature type="strand" evidence="13">
    <location>
        <begin position="111"/>
        <end position="117"/>
    </location>
</feature>
<feature type="strand" evidence="13">
    <location>
        <begin position="137"/>
        <end position="140"/>
    </location>
</feature>
<feature type="helix" evidence="13">
    <location>
        <begin position="141"/>
        <end position="151"/>
    </location>
</feature>
<feature type="turn" evidence="13">
    <location>
        <begin position="152"/>
        <end position="154"/>
    </location>
</feature>
<feature type="strand" evidence="13">
    <location>
        <begin position="156"/>
        <end position="162"/>
    </location>
</feature>
<feature type="strand" evidence="13">
    <location>
        <begin position="167"/>
        <end position="173"/>
    </location>
</feature>
<feature type="strand" evidence="13">
    <location>
        <begin position="176"/>
        <end position="182"/>
    </location>
</feature>
<feature type="strand" evidence="13">
    <location>
        <begin position="203"/>
        <end position="208"/>
    </location>
</feature>
<feature type="helix" evidence="13">
    <location>
        <begin position="209"/>
        <end position="215"/>
    </location>
</feature>
<feature type="helix" evidence="13">
    <location>
        <begin position="216"/>
        <end position="221"/>
    </location>
</feature>
<feature type="strand" evidence="13">
    <location>
        <begin position="223"/>
        <end position="228"/>
    </location>
</feature>
<feature type="strand" evidence="13">
    <location>
        <begin position="235"/>
        <end position="241"/>
    </location>
</feature>
<feature type="turn" evidence="13">
    <location>
        <begin position="242"/>
        <end position="244"/>
    </location>
</feature>
<feature type="strand" evidence="13">
    <location>
        <begin position="245"/>
        <end position="251"/>
    </location>
</feature>
<keyword id="KW-0002">3D-structure</keyword>
<keyword id="KW-0158">Chromosome</keyword>
<keyword id="KW-0963">Cytoplasm</keyword>
<keyword id="KW-0903">Direct protein sequencing</keyword>
<keyword id="KW-0235">DNA replication</keyword>
<keyword id="KW-0238">DNA-binding</keyword>
<keyword id="KW-0539">Nucleus</keyword>
<keyword id="KW-1185">Reference proteome</keyword>
<accession>P17917</accession>
<accession>Q540V1</accession>
<accession>Q9V909</accession>
<dbReference type="EMBL" id="M33950">
    <property type="protein sequence ID" value="AAA28746.1"/>
    <property type="molecule type" value="Genomic_DNA"/>
</dbReference>
<dbReference type="EMBL" id="AE013599">
    <property type="protein sequence ID" value="AAF57493.1"/>
    <property type="molecule type" value="Genomic_DNA"/>
</dbReference>
<dbReference type="EMBL" id="AE013599">
    <property type="protein sequence ID" value="AAS64796.1"/>
    <property type="molecule type" value="Genomic_DNA"/>
</dbReference>
<dbReference type="EMBL" id="AY122197">
    <property type="protein sequence ID" value="AAM52709.1"/>
    <property type="molecule type" value="mRNA"/>
</dbReference>
<dbReference type="PIR" id="A34752">
    <property type="entry name" value="A34752"/>
</dbReference>
<dbReference type="RefSeq" id="NP_476905.1">
    <property type="nucleotide sequence ID" value="NM_057557.4"/>
</dbReference>
<dbReference type="RefSeq" id="NP_995904.1">
    <property type="nucleotide sequence ID" value="NM_206182.2"/>
</dbReference>
<dbReference type="PDB" id="4HK1">
    <property type="method" value="X-ray"/>
    <property type="resolution" value="2.00 A"/>
    <property type="chains" value="A=1-260"/>
</dbReference>
<dbReference type="PDBsum" id="4HK1"/>
<dbReference type="SMR" id="P17917"/>
<dbReference type="BioGRID" id="62946">
    <property type="interactions" value="82"/>
</dbReference>
<dbReference type="ComplexPortal" id="CPX-543">
    <property type="entry name" value="PCNA homotrimer"/>
</dbReference>
<dbReference type="DIP" id="DIP-20560N"/>
<dbReference type="ELM" id="P17917"/>
<dbReference type="FunCoup" id="P17917">
    <property type="interactions" value="2230"/>
</dbReference>
<dbReference type="IntAct" id="P17917">
    <property type="interactions" value="151"/>
</dbReference>
<dbReference type="STRING" id="7227.FBpp0085619"/>
<dbReference type="PaxDb" id="7227-FBpp0085619"/>
<dbReference type="EnsemblMetazoa" id="FBtr0086307">
    <property type="protein sequence ID" value="FBpp0085619"/>
    <property type="gene ID" value="FBgn0005655"/>
</dbReference>
<dbReference type="EnsemblMetazoa" id="FBtr0086308">
    <property type="protein sequence ID" value="FBpp0089395"/>
    <property type="gene ID" value="FBgn0005655"/>
</dbReference>
<dbReference type="GeneID" id="37290"/>
<dbReference type="KEGG" id="dme:Dmel_CG9193"/>
<dbReference type="AGR" id="FB:FBgn0005655"/>
<dbReference type="CTD" id="5111"/>
<dbReference type="FlyBase" id="FBgn0005655">
    <property type="gene designation" value="PCNA"/>
</dbReference>
<dbReference type="VEuPathDB" id="VectorBase:FBgn0005655"/>
<dbReference type="eggNOG" id="KOG1636">
    <property type="taxonomic scope" value="Eukaryota"/>
</dbReference>
<dbReference type="GeneTree" id="ENSGT00390000004965"/>
<dbReference type="HOGENOM" id="CLU_043978_3_0_1"/>
<dbReference type="InParanoid" id="P17917"/>
<dbReference type="OMA" id="EMKLINM"/>
<dbReference type="OrthoDB" id="534348at2759"/>
<dbReference type="PhylomeDB" id="P17917"/>
<dbReference type="Reactome" id="R-DME-110312">
    <property type="pathway name" value="Translesion synthesis by REV1"/>
</dbReference>
<dbReference type="Reactome" id="R-DME-110314">
    <property type="pathway name" value="Recognition of DNA damage by PCNA-containing replication complex"/>
</dbReference>
<dbReference type="Reactome" id="R-DME-110320">
    <property type="pathway name" value="Translesion Synthesis by POLH"/>
</dbReference>
<dbReference type="Reactome" id="R-DME-5358565">
    <property type="pathway name" value="Mismatch repair (MMR) directed by MSH2:MSH6 (MutSalpha)"/>
</dbReference>
<dbReference type="Reactome" id="R-DME-5651801">
    <property type="pathway name" value="PCNA-Dependent Long Patch Base Excision Repair"/>
</dbReference>
<dbReference type="Reactome" id="R-DME-5655862">
    <property type="pathway name" value="Translesion synthesis by POLK"/>
</dbReference>
<dbReference type="Reactome" id="R-DME-5656121">
    <property type="pathway name" value="Translesion synthesis by POLI"/>
</dbReference>
<dbReference type="Reactome" id="R-DME-5656169">
    <property type="pathway name" value="Termination of translesion DNA synthesis"/>
</dbReference>
<dbReference type="Reactome" id="R-DME-5696400">
    <property type="pathway name" value="Dual Incision in GG-NER"/>
</dbReference>
<dbReference type="Reactome" id="R-DME-6782135">
    <property type="pathway name" value="Dual incision in TC-NER"/>
</dbReference>
<dbReference type="Reactome" id="R-DME-6804114">
    <property type="pathway name" value="TP53 Regulates Transcription of Genes Involved in G2 Cell Cycle Arrest"/>
</dbReference>
<dbReference type="Reactome" id="R-DME-69091">
    <property type="pathway name" value="Polymerase switching"/>
</dbReference>
<dbReference type="Reactome" id="R-DME-69166">
    <property type="pathway name" value="Removal of the Flap Intermediate"/>
</dbReference>
<dbReference type="Reactome" id="R-DME-69183">
    <property type="pathway name" value="Processive synthesis on the lagging strand"/>
</dbReference>
<dbReference type="SignaLink" id="P17917"/>
<dbReference type="BioGRID-ORCS" id="37290">
    <property type="hits" value="0 hits in 1 CRISPR screen"/>
</dbReference>
<dbReference type="CD-CODE" id="58FDC23F">
    <property type="entry name" value="PcG body"/>
</dbReference>
<dbReference type="EvolutionaryTrace" id="P17917"/>
<dbReference type="GenomeRNAi" id="37290"/>
<dbReference type="PRO" id="PR:P17917"/>
<dbReference type="Proteomes" id="UP000000803">
    <property type="component" value="Chromosome 2R"/>
</dbReference>
<dbReference type="Bgee" id="FBgn0005655">
    <property type="expression patterns" value="Expressed in secondary oocyte and 86 other cell types or tissues"/>
</dbReference>
<dbReference type="GO" id="GO:0000785">
    <property type="term" value="C:chromatin"/>
    <property type="evidence" value="ECO:0000314"/>
    <property type="project" value="UniProtKB"/>
</dbReference>
<dbReference type="GO" id="GO:0005737">
    <property type="term" value="C:cytoplasm"/>
    <property type="evidence" value="ECO:0000314"/>
    <property type="project" value="UniProtKB"/>
</dbReference>
<dbReference type="GO" id="GO:0043596">
    <property type="term" value="C:nuclear replication fork"/>
    <property type="evidence" value="ECO:0000314"/>
    <property type="project" value="FlyBase"/>
</dbReference>
<dbReference type="GO" id="GO:0005634">
    <property type="term" value="C:nucleus"/>
    <property type="evidence" value="ECO:0000314"/>
    <property type="project" value="FlyBase"/>
</dbReference>
<dbReference type="GO" id="GO:0043626">
    <property type="term" value="C:PCNA complex"/>
    <property type="evidence" value="ECO:0000318"/>
    <property type="project" value="GO_Central"/>
</dbReference>
<dbReference type="GO" id="GO:0003682">
    <property type="term" value="F:chromatin binding"/>
    <property type="evidence" value="ECO:0000314"/>
    <property type="project" value="UniProtKB"/>
</dbReference>
<dbReference type="GO" id="GO:0003677">
    <property type="term" value="F:DNA binding"/>
    <property type="evidence" value="ECO:0007669"/>
    <property type="project" value="UniProtKB-KW"/>
</dbReference>
<dbReference type="GO" id="GO:0030337">
    <property type="term" value="F:DNA polymerase processivity factor activity"/>
    <property type="evidence" value="ECO:0000318"/>
    <property type="project" value="GO_Central"/>
</dbReference>
<dbReference type="GO" id="GO:0006974">
    <property type="term" value="P:DNA damage response"/>
    <property type="evidence" value="ECO:0000314"/>
    <property type="project" value="UniProtKB"/>
</dbReference>
<dbReference type="GO" id="GO:0006260">
    <property type="term" value="P:DNA replication"/>
    <property type="evidence" value="ECO:0000315"/>
    <property type="project" value="FlyBase"/>
</dbReference>
<dbReference type="GO" id="GO:0006261">
    <property type="term" value="P:DNA-templated DNA replication"/>
    <property type="evidence" value="ECO:0000304"/>
    <property type="project" value="FlyBase"/>
</dbReference>
<dbReference type="GO" id="GO:0007307">
    <property type="term" value="P:eggshell chorion gene amplification"/>
    <property type="evidence" value="ECO:0000304"/>
    <property type="project" value="FlyBase"/>
</dbReference>
<dbReference type="GO" id="GO:0006272">
    <property type="term" value="P:leading strand elongation"/>
    <property type="evidence" value="ECO:0000318"/>
    <property type="project" value="GO_Central"/>
</dbReference>
<dbReference type="GO" id="GO:0006298">
    <property type="term" value="P:mismatch repair"/>
    <property type="evidence" value="ECO:0000318"/>
    <property type="project" value="GO_Central"/>
</dbReference>
<dbReference type="GO" id="GO:0007052">
    <property type="term" value="P:mitotic spindle organization"/>
    <property type="evidence" value="ECO:0000315"/>
    <property type="project" value="FlyBase"/>
</dbReference>
<dbReference type="GO" id="GO:0006289">
    <property type="term" value="P:nucleotide-excision repair"/>
    <property type="evidence" value="ECO:0000304"/>
    <property type="project" value="FlyBase"/>
</dbReference>
<dbReference type="GO" id="GO:0045739">
    <property type="term" value="P:positive regulation of DNA repair"/>
    <property type="evidence" value="ECO:0000315"/>
    <property type="project" value="ComplexPortal"/>
</dbReference>
<dbReference type="GO" id="GO:0045740">
    <property type="term" value="P:positive regulation of DNA replication"/>
    <property type="evidence" value="ECO:0000315"/>
    <property type="project" value="ComplexPortal"/>
</dbReference>
<dbReference type="GO" id="GO:0042542">
    <property type="term" value="P:response to hydrogen peroxide"/>
    <property type="evidence" value="ECO:0000314"/>
    <property type="project" value="UniProtKB"/>
</dbReference>
<dbReference type="GO" id="GO:0072702">
    <property type="term" value="P:response to methyl methanesulfonate"/>
    <property type="evidence" value="ECO:0000314"/>
    <property type="project" value="UniProtKB"/>
</dbReference>
<dbReference type="GO" id="GO:0009411">
    <property type="term" value="P:response to UV"/>
    <property type="evidence" value="ECO:0000314"/>
    <property type="project" value="UniProtKB"/>
</dbReference>
<dbReference type="GO" id="GO:0019985">
    <property type="term" value="P:translesion synthesis"/>
    <property type="evidence" value="ECO:0000318"/>
    <property type="project" value="GO_Central"/>
</dbReference>
<dbReference type="CDD" id="cd00577">
    <property type="entry name" value="PCNA"/>
    <property type="match status" value="1"/>
</dbReference>
<dbReference type="FunFam" id="3.70.10.10:FF:000001">
    <property type="entry name" value="Proliferating cell nuclear antigen"/>
    <property type="match status" value="1"/>
</dbReference>
<dbReference type="Gene3D" id="3.70.10.10">
    <property type="match status" value="1"/>
</dbReference>
<dbReference type="HAMAP" id="MF_00317">
    <property type="entry name" value="DNApol_clamp_arch"/>
    <property type="match status" value="1"/>
</dbReference>
<dbReference type="InterPro" id="IPR046938">
    <property type="entry name" value="DNA_clamp_sf"/>
</dbReference>
<dbReference type="InterPro" id="IPR000730">
    <property type="entry name" value="Pr_cel_nuc_antig"/>
</dbReference>
<dbReference type="InterPro" id="IPR022649">
    <property type="entry name" value="Pr_cel_nuc_antig_C"/>
</dbReference>
<dbReference type="InterPro" id="IPR022659">
    <property type="entry name" value="Pr_cel_nuc_antig_CS"/>
</dbReference>
<dbReference type="InterPro" id="IPR022648">
    <property type="entry name" value="Pr_cel_nuc_antig_N"/>
</dbReference>
<dbReference type="NCBIfam" id="TIGR00590">
    <property type="entry name" value="pcna"/>
    <property type="match status" value="1"/>
</dbReference>
<dbReference type="PANTHER" id="PTHR11352">
    <property type="entry name" value="PROLIFERATING CELL NUCLEAR ANTIGEN"/>
    <property type="match status" value="1"/>
</dbReference>
<dbReference type="PANTHER" id="PTHR11352:SF0">
    <property type="entry name" value="PROLIFERATING CELL NUCLEAR ANTIGEN"/>
    <property type="match status" value="1"/>
</dbReference>
<dbReference type="Pfam" id="PF02747">
    <property type="entry name" value="PCNA_C"/>
    <property type="match status" value="1"/>
</dbReference>
<dbReference type="Pfam" id="PF00705">
    <property type="entry name" value="PCNA_N"/>
    <property type="match status" value="1"/>
</dbReference>
<dbReference type="PRINTS" id="PR00339">
    <property type="entry name" value="PCNACYCLIN"/>
</dbReference>
<dbReference type="SUPFAM" id="SSF55979">
    <property type="entry name" value="DNA clamp"/>
    <property type="match status" value="2"/>
</dbReference>
<dbReference type="PROSITE" id="PS01251">
    <property type="entry name" value="PCNA_1"/>
    <property type="match status" value="1"/>
</dbReference>
<dbReference type="PROSITE" id="PS00293">
    <property type="entry name" value="PCNA_2"/>
    <property type="match status" value="1"/>
</dbReference>
<sequence>MFEARLGQATILKKILDAIKDLLNEATFDCSDSGIQLQAMDNSHVSLVSLTLRSDGFDKFRCDRNLSMGMNLGSMAKILKCANNEDNVTMKAQDNADTVTIMFESANQEKVSDYEMKLMNLDQEHLGIPETDFSCVVRMPAMEFARICRDLAQFSESVVICCTKEGVKFSASGDVGTANIKLAQTGSVDKEEEAVIIEMQEPVTLTFACRYLNAFTKATPLSTQVQLSMCADVPLVVEYAIKDLGHIRYYLAPKIEDNET</sequence>